<keyword id="KW-0539">Nucleus</keyword>
<keyword id="KW-1185">Reference proteome</keyword>
<keyword id="KW-0833">Ubl conjugation pathway</keyword>
<gene>
    <name type="primary">PP2B1</name>
    <name type="synonym">SKIP21</name>
    <name type="ordered locus">At2g02230</name>
    <name type="ORF">T16F16.2</name>
</gene>
<organism>
    <name type="scientific">Arabidopsis thaliana</name>
    <name type="common">Mouse-ear cress</name>
    <dbReference type="NCBI Taxonomy" id="3702"/>
    <lineage>
        <taxon>Eukaryota</taxon>
        <taxon>Viridiplantae</taxon>
        <taxon>Streptophyta</taxon>
        <taxon>Embryophyta</taxon>
        <taxon>Tracheophyta</taxon>
        <taxon>Spermatophyta</taxon>
        <taxon>Magnoliopsida</taxon>
        <taxon>eudicotyledons</taxon>
        <taxon>Gunneridae</taxon>
        <taxon>Pentapetalae</taxon>
        <taxon>rosids</taxon>
        <taxon>malvids</taxon>
        <taxon>Brassicales</taxon>
        <taxon>Brassicaceae</taxon>
        <taxon>Camelineae</taxon>
        <taxon>Arabidopsis</taxon>
    </lineage>
</organism>
<reference key="1">
    <citation type="journal article" date="1999" name="Nature">
        <title>Sequence and analysis of chromosome 2 of the plant Arabidopsis thaliana.</title>
        <authorList>
            <person name="Lin X."/>
            <person name="Kaul S."/>
            <person name="Rounsley S.D."/>
            <person name="Shea T.P."/>
            <person name="Benito M.-I."/>
            <person name="Town C.D."/>
            <person name="Fujii C.Y."/>
            <person name="Mason T.M."/>
            <person name="Bowman C.L."/>
            <person name="Barnstead M.E."/>
            <person name="Feldblyum T.V."/>
            <person name="Buell C.R."/>
            <person name="Ketchum K.A."/>
            <person name="Lee J.J."/>
            <person name="Ronning C.M."/>
            <person name="Koo H.L."/>
            <person name="Moffat K.S."/>
            <person name="Cronin L.A."/>
            <person name="Shen M."/>
            <person name="Pai G."/>
            <person name="Van Aken S."/>
            <person name="Umayam L."/>
            <person name="Tallon L.J."/>
            <person name="Gill J.E."/>
            <person name="Adams M.D."/>
            <person name="Carrera A.J."/>
            <person name="Creasy T.H."/>
            <person name="Goodman H.M."/>
            <person name="Somerville C.R."/>
            <person name="Copenhaver G.P."/>
            <person name="Preuss D."/>
            <person name="Nierman W.C."/>
            <person name="White O."/>
            <person name="Eisen J.A."/>
            <person name="Salzberg S.L."/>
            <person name="Fraser C.M."/>
            <person name="Venter J.C."/>
        </authorList>
    </citation>
    <scope>NUCLEOTIDE SEQUENCE [LARGE SCALE GENOMIC DNA]</scope>
    <source>
        <strain>cv. Columbia</strain>
    </source>
</reference>
<reference key="2">
    <citation type="journal article" date="2017" name="Plant J.">
        <title>Araport11: a complete reannotation of the Arabidopsis thaliana reference genome.</title>
        <authorList>
            <person name="Cheng C.Y."/>
            <person name="Krishnakumar V."/>
            <person name="Chan A.P."/>
            <person name="Thibaud-Nissen F."/>
            <person name="Schobel S."/>
            <person name="Town C.D."/>
        </authorList>
    </citation>
    <scope>GENOME REANNOTATION</scope>
    <source>
        <strain>cv. Columbia</strain>
    </source>
</reference>
<reference key="3">
    <citation type="submission" date="2005-02" db="EMBL/GenBank/DDBJ databases">
        <title>Arabidopsis ORF clones.</title>
        <authorList>
            <person name="Kim C.J."/>
            <person name="Chen H."/>
            <person name="Cheuk R.F."/>
            <person name="Shinn P."/>
            <person name="Ecker J.R."/>
        </authorList>
    </citation>
    <scope>NUCLEOTIDE SEQUENCE [LARGE SCALE MRNA]</scope>
    <source>
        <strain>cv. Columbia</strain>
    </source>
</reference>
<reference key="4">
    <citation type="submission" date="2006-07" db="EMBL/GenBank/DDBJ databases">
        <title>Large-scale analysis of RIKEN Arabidopsis full-length (RAFL) cDNAs.</title>
        <authorList>
            <person name="Totoki Y."/>
            <person name="Seki M."/>
            <person name="Ishida J."/>
            <person name="Nakajima M."/>
            <person name="Enju A."/>
            <person name="Kamiya A."/>
            <person name="Narusaka M."/>
            <person name="Shin-i T."/>
            <person name="Nakagawa M."/>
            <person name="Sakamoto N."/>
            <person name="Oishi K."/>
            <person name="Kohara Y."/>
            <person name="Kobayashi M."/>
            <person name="Toyoda A."/>
            <person name="Sakaki Y."/>
            <person name="Sakurai T."/>
            <person name="Iida K."/>
            <person name="Akiyama K."/>
            <person name="Satou M."/>
            <person name="Toyoda T."/>
            <person name="Konagaya A."/>
            <person name="Carninci P."/>
            <person name="Kawai J."/>
            <person name="Hayashizaki Y."/>
            <person name="Shinozaki K."/>
        </authorList>
    </citation>
    <scope>NUCLEOTIDE SEQUENCE [LARGE SCALE MRNA]</scope>
    <source>
        <strain>cv. Columbia</strain>
    </source>
</reference>
<reference key="5">
    <citation type="journal article" date="2003" name="Plant J.">
        <title>Protein interaction analysis of SCF ubiquitin E3 ligase subunits from Arabidopsis.</title>
        <authorList>
            <person name="Risseeuw E.P."/>
            <person name="Daskalchuk T.E."/>
            <person name="Banks T.W."/>
            <person name="Liu E."/>
            <person name="Cotelesage J."/>
            <person name="Hellmann H."/>
            <person name="Estelle M."/>
            <person name="Somers D.E."/>
            <person name="Crosby W.L."/>
        </authorList>
    </citation>
    <scope>INTERACTION WITH SKP1A/ASK1 AND SPK1B/ASK2</scope>
</reference>
<reference key="6">
    <citation type="journal article" date="2003" name="Plant Physiol.">
        <title>Diversity of the superfamily of phloem lectins (phloem protein 2) in angiosperms.</title>
        <authorList>
            <person name="Dinant S."/>
            <person name="Clark A.M."/>
            <person name="Zhu Y."/>
            <person name="Vilaine F."/>
            <person name="Palauqui J.-C."/>
            <person name="Kusiak C."/>
            <person name="Thompson G.A."/>
        </authorList>
    </citation>
    <scope>GENE FAMILY</scope>
    <scope>NOMENCLATURE</scope>
</reference>
<comment type="function">
    <text evidence="1">Component of SCF(ASK-cullin-F-box) E3 ubiquitin ligase complexes, which may mediate the ubiquitination and subsequent proteasomal degradation of target proteins.</text>
</comment>
<comment type="pathway">
    <text>Protein modification; protein ubiquitination.</text>
</comment>
<comment type="subunit">
    <text evidence="1 4">Part of a SCF (ASK-cullin-F-box) protein ligase complex (By similarity). Interacts with SKP1A/ASK1 and SPK1B/ASK2.</text>
</comment>
<comment type="subcellular location">
    <subcellularLocation>
        <location evidence="1">Nucleus</location>
    </subcellularLocation>
</comment>
<comment type="domain">
    <text evidence="1">The F-box is necessary for the interaction with ASK proteins.</text>
</comment>
<comment type="sequence caution" evidence="5">
    <conflict type="erroneous gene model prediction">
        <sequence resource="EMBL-CDS" id="AAC78508"/>
    </conflict>
</comment>
<proteinExistence type="evidence at protein level"/>
<sequence length="336" mass="37130">MEQIHGGDSNSGGGGGGSSRNDEISVTRASRFDALPEDCISKVISHTSPRDACVVASVSKSVKSAAQSDLVWEMFLPSEYSSLVLQSANHLSKKEIFLSLADNSVLVENGKKSFWVEKASGKKCYMLSAMELTIIWGDSPAYWKWITVPESKFEKVAELRNVCWFEVRGKISCGMLSKGTHYSVYVVFKTANGRSYGFDLVPVEAGVGFVGKVATKKSVYFESGNADSRSATSHYSGISYAMVSRAFRMRRPWMQVQREEEEEVEGERERGMNVVGPKERVDGWSEVELGKFYINNGGCGDDGSDEIEISIMETQNGNWKSGLIIQGIEIRPERSN</sequence>
<evidence type="ECO:0000250" key="1"/>
<evidence type="ECO:0000255" key="2">
    <source>
        <dbReference type="PROSITE-ProRule" id="PRU00080"/>
    </source>
</evidence>
<evidence type="ECO:0000256" key="3">
    <source>
        <dbReference type="SAM" id="MobiDB-lite"/>
    </source>
</evidence>
<evidence type="ECO:0000269" key="4">
    <source>
    </source>
</evidence>
<evidence type="ECO:0000305" key="5"/>
<protein>
    <recommendedName>
        <fullName>F-box protein PP2-B1</fullName>
    </recommendedName>
    <alternativeName>
        <fullName>Protein PHLOEM PROTEIN 2-LIKE B1</fullName>
        <shortName>AtPP2-B1</shortName>
    </alternativeName>
    <alternativeName>
        <fullName>SKP1-interacting partner 21</fullName>
    </alternativeName>
</protein>
<feature type="chain" id="PRO_0000272211" description="F-box protein PP2-B1">
    <location>
        <begin position="1"/>
        <end position="336"/>
    </location>
</feature>
<feature type="domain" description="F-box" evidence="2">
    <location>
        <begin position="29"/>
        <end position="75"/>
    </location>
</feature>
<feature type="region of interest" description="Disordered" evidence="3">
    <location>
        <begin position="1"/>
        <end position="22"/>
    </location>
</feature>
<feature type="compositionally biased region" description="Gly residues" evidence="3">
    <location>
        <begin position="9"/>
        <end position="18"/>
    </location>
</feature>
<name>PP2B1_ARATH</name>
<dbReference type="EMBL" id="AC005312">
    <property type="protein sequence ID" value="AAC78508.1"/>
    <property type="status" value="ALT_SEQ"/>
    <property type="molecule type" value="Genomic_DNA"/>
</dbReference>
<dbReference type="EMBL" id="CP002685">
    <property type="protein sequence ID" value="AEC05559.1"/>
    <property type="molecule type" value="Genomic_DNA"/>
</dbReference>
<dbReference type="EMBL" id="AK229118">
    <property type="protein sequence ID" value="BAF00994.1"/>
    <property type="molecule type" value="mRNA"/>
</dbReference>
<dbReference type="EMBL" id="BT010729">
    <property type="protein sequence ID" value="AAR20786.1"/>
    <property type="molecule type" value="mRNA"/>
</dbReference>
<dbReference type="EMBL" id="BT020602">
    <property type="protein sequence ID" value="AAW80875.1"/>
    <property type="molecule type" value="mRNA"/>
</dbReference>
<dbReference type="PIR" id="E84434">
    <property type="entry name" value="E84434"/>
</dbReference>
<dbReference type="SMR" id="Q6NPT8"/>
<dbReference type="BioGRID" id="157">
    <property type="interactions" value="8"/>
</dbReference>
<dbReference type="FunCoup" id="Q6NPT8">
    <property type="interactions" value="783"/>
</dbReference>
<dbReference type="IntAct" id="Q6NPT8">
    <property type="interactions" value="2"/>
</dbReference>
<dbReference type="STRING" id="3702.Q6NPT8"/>
<dbReference type="PaxDb" id="3702-AT2G02230.1"/>
<dbReference type="ProteomicsDB" id="248969"/>
<dbReference type="EnsemblPlants" id="AT2G02230.1">
    <property type="protein sequence ID" value="AT2G02230.1"/>
    <property type="gene ID" value="AT2G02230"/>
</dbReference>
<dbReference type="GeneID" id="814754"/>
<dbReference type="Gramene" id="AT2G02230.1">
    <property type="protein sequence ID" value="AT2G02230.1"/>
    <property type="gene ID" value="AT2G02230"/>
</dbReference>
<dbReference type="KEGG" id="ath:AT2G02230"/>
<dbReference type="Araport" id="AT2G02230"/>
<dbReference type="TAIR" id="AT2G02230">
    <property type="gene designation" value="PP2-B1"/>
</dbReference>
<dbReference type="eggNOG" id="ENOG502QRA4">
    <property type="taxonomic scope" value="Eukaryota"/>
</dbReference>
<dbReference type="HOGENOM" id="CLU_050973_0_0_1"/>
<dbReference type="InParanoid" id="Q6NPT8"/>
<dbReference type="OMA" id="LVWEMFL"/>
<dbReference type="PhylomeDB" id="Q6NPT8"/>
<dbReference type="UniPathway" id="UPA00143"/>
<dbReference type="PRO" id="PR:Q6NPT8"/>
<dbReference type="Proteomes" id="UP000006548">
    <property type="component" value="Chromosome 2"/>
</dbReference>
<dbReference type="ExpressionAtlas" id="Q6NPT8">
    <property type="expression patterns" value="baseline and differential"/>
</dbReference>
<dbReference type="GO" id="GO:0005634">
    <property type="term" value="C:nucleus"/>
    <property type="evidence" value="ECO:0007669"/>
    <property type="project" value="UniProtKB-SubCell"/>
</dbReference>
<dbReference type="GO" id="GO:0030246">
    <property type="term" value="F:carbohydrate binding"/>
    <property type="evidence" value="ECO:0000250"/>
    <property type="project" value="TAIR"/>
</dbReference>
<dbReference type="GO" id="GO:0016567">
    <property type="term" value="P:protein ubiquitination"/>
    <property type="evidence" value="ECO:0007669"/>
    <property type="project" value="UniProtKB-UniPathway"/>
</dbReference>
<dbReference type="CDD" id="cd22162">
    <property type="entry name" value="F-box_AtSKIP3-like"/>
    <property type="match status" value="1"/>
</dbReference>
<dbReference type="FunFam" id="1.20.1280.50:FF:000112">
    <property type="entry name" value="F-box protein PP2-B1"/>
    <property type="match status" value="1"/>
</dbReference>
<dbReference type="Gene3D" id="1.20.1280.50">
    <property type="match status" value="1"/>
</dbReference>
<dbReference type="InterPro" id="IPR036047">
    <property type="entry name" value="F-box-like_dom_sf"/>
</dbReference>
<dbReference type="InterPro" id="IPR001810">
    <property type="entry name" value="F-box_dom"/>
</dbReference>
<dbReference type="InterPro" id="IPR025886">
    <property type="entry name" value="PP2-like"/>
</dbReference>
<dbReference type="PANTHER" id="PTHR32278">
    <property type="entry name" value="F-BOX DOMAIN-CONTAINING PROTEIN"/>
    <property type="match status" value="1"/>
</dbReference>
<dbReference type="PANTHER" id="PTHR32278:SF143">
    <property type="entry name" value="F-BOX PROTEIN PP2-B1"/>
    <property type="match status" value="1"/>
</dbReference>
<dbReference type="Pfam" id="PF00646">
    <property type="entry name" value="F-box"/>
    <property type="match status" value="1"/>
</dbReference>
<dbReference type="Pfam" id="PF14299">
    <property type="entry name" value="PP2"/>
    <property type="match status" value="1"/>
</dbReference>
<dbReference type="SUPFAM" id="SSF81383">
    <property type="entry name" value="F-box domain"/>
    <property type="match status" value="1"/>
</dbReference>
<dbReference type="PROSITE" id="PS50181">
    <property type="entry name" value="FBOX"/>
    <property type="match status" value="1"/>
</dbReference>
<accession>Q6NPT8</accession>
<accession>Q9ZVR6</accession>